<reference key="1">
    <citation type="journal article" date="2005" name="Nature">
        <title>Genomic sequence of the pathogenic and allergenic filamentous fungus Aspergillus fumigatus.</title>
        <authorList>
            <person name="Nierman W.C."/>
            <person name="Pain A."/>
            <person name="Anderson M.J."/>
            <person name="Wortman J.R."/>
            <person name="Kim H.S."/>
            <person name="Arroyo J."/>
            <person name="Berriman M."/>
            <person name="Abe K."/>
            <person name="Archer D.B."/>
            <person name="Bermejo C."/>
            <person name="Bennett J.W."/>
            <person name="Bowyer P."/>
            <person name="Chen D."/>
            <person name="Collins M."/>
            <person name="Coulsen R."/>
            <person name="Davies R."/>
            <person name="Dyer P.S."/>
            <person name="Farman M.L."/>
            <person name="Fedorova N."/>
            <person name="Fedorova N.D."/>
            <person name="Feldblyum T.V."/>
            <person name="Fischer R."/>
            <person name="Fosker N."/>
            <person name="Fraser A."/>
            <person name="Garcia J.L."/>
            <person name="Garcia M.J."/>
            <person name="Goble A."/>
            <person name="Goldman G.H."/>
            <person name="Gomi K."/>
            <person name="Griffith-Jones S."/>
            <person name="Gwilliam R."/>
            <person name="Haas B.J."/>
            <person name="Haas H."/>
            <person name="Harris D.E."/>
            <person name="Horiuchi H."/>
            <person name="Huang J."/>
            <person name="Humphray S."/>
            <person name="Jimenez J."/>
            <person name="Keller N."/>
            <person name="Khouri H."/>
            <person name="Kitamoto K."/>
            <person name="Kobayashi T."/>
            <person name="Konzack S."/>
            <person name="Kulkarni R."/>
            <person name="Kumagai T."/>
            <person name="Lafton A."/>
            <person name="Latge J.-P."/>
            <person name="Li W."/>
            <person name="Lord A."/>
            <person name="Lu C."/>
            <person name="Majoros W.H."/>
            <person name="May G.S."/>
            <person name="Miller B.L."/>
            <person name="Mohamoud Y."/>
            <person name="Molina M."/>
            <person name="Monod M."/>
            <person name="Mouyna I."/>
            <person name="Mulligan S."/>
            <person name="Murphy L.D."/>
            <person name="O'Neil S."/>
            <person name="Paulsen I."/>
            <person name="Penalva M.A."/>
            <person name="Pertea M."/>
            <person name="Price C."/>
            <person name="Pritchard B.L."/>
            <person name="Quail M.A."/>
            <person name="Rabbinowitsch E."/>
            <person name="Rawlins N."/>
            <person name="Rajandream M.A."/>
            <person name="Reichard U."/>
            <person name="Renauld H."/>
            <person name="Robson G.D."/>
            <person name="Rodriguez de Cordoba S."/>
            <person name="Rodriguez-Pena J.M."/>
            <person name="Ronning C.M."/>
            <person name="Rutter S."/>
            <person name="Salzberg S.L."/>
            <person name="Sanchez M."/>
            <person name="Sanchez-Ferrero J.C."/>
            <person name="Saunders D."/>
            <person name="Seeger K."/>
            <person name="Squares R."/>
            <person name="Squares S."/>
            <person name="Takeuchi M."/>
            <person name="Tekaia F."/>
            <person name="Turner G."/>
            <person name="Vazquez de Aldana C.R."/>
            <person name="Weidman J."/>
            <person name="White O."/>
            <person name="Woodward J.R."/>
            <person name="Yu J.-H."/>
            <person name="Fraser C.M."/>
            <person name="Galagan J.E."/>
            <person name="Asai K."/>
            <person name="Machida M."/>
            <person name="Hall N."/>
            <person name="Barrell B.G."/>
            <person name="Denning D.W."/>
        </authorList>
    </citation>
    <scope>NUCLEOTIDE SEQUENCE [LARGE SCALE GENOMIC DNA]</scope>
    <source>
        <strain>ATCC MYA-4609 / CBS 101355 / FGSC A1100 / Af293</strain>
    </source>
</reference>
<comment type="function">
    <text evidence="1">Probable component of the endoplasmic reticulum-associated degradation (ERAD) pathway.</text>
</comment>
<comment type="similarity">
    <text evidence="3">Belongs to the LCL2 family.</text>
</comment>
<protein>
    <recommendedName>
        <fullName>Long chronological lifespan protein 2</fullName>
    </recommendedName>
</protein>
<organism>
    <name type="scientific">Aspergillus fumigatus (strain ATCC MYA-4609 / CBS 101355 / FGSC A1100 / Af293)</name>
    <name type="common">Neosartorya fumigata</name>
    <dbReference type="NCBI Taxonomy" id="330879"/>
    <lineage>
        <taxon>Eukaryota</taxon>
        <taxon>Fungi</taxon>
        <taxon>Dikarya</taxon>
        <taxon>Ascomycota</taxon>
        <taxon>Pezizomycotina</taxon>
        <taxon>Eurotiomycetes</taxon>
        <taxon>Eurotiomycetidae</taxon>
        <taxon>Eurotiales</taxon>
        <taxon>Aspergillaceae</taxon>
        <taxon>Aspergillus</taxon>
        <taxon>Aspergillus subgen. Fumigati</taxon>
    </lineage>
</organism>
<sequence length="122" mass="13405">MLSSWVRCLGALLFLASVAQAQFQFFEHMFGGGHQEHHQQNTQNSASDSARYQQLWEGTNCNKYLCPGTLACVDFPHHCPCAHPNVEDKVELGEGSAVCISKGGYKPGEAARKIELARKGLL</sequence>
<evidence type="ECO:0000250" key="1"/>
<evidence type="ECO:0000255" key="2"/>
<evidence type="ECO:0000305" key="3"/>
<name>LCL2_ASPFU</name>
<dbReference type="EMBL" id="AAHF01000011">
    <property type="protein sequence ID" value="EAL85902.1"/>
    <property type="molecule type" value="Genomic_DNA"/>
</dbReference>
<dbReference type="RefSeq" id="XP_747940.1">
    <property type="nucleotide sequence ID" value="XM_742847.1"/>
</dbReference>
<dbReference type="SMR" id="Q4WES5"/>
<dbReference type="STRING" id="330879.Q4WES5"/>
<dbReference type="EnsemblFungi" id="EAL85902">
    <property type="protein sequence ID" value="EAL85902"/>
    <property type="gene ID" value="AFUA_5G04040"/>
</dbReference>
<dbReference type="GeneID" id="3505529"/>
<dbReference type="KEGG" id="afm:AFUA_5G04040"/>
<dbReference type="VEuPathDB" id="FungiDB:Afu5g04040"/>
<dbReference type="eggNOG" id="ENOG502S416">
    <property type="taxonomic scope" value="Eukaryota"/>
</dbReference>
<dbReference type="HOGENOM" id="CLU_142363_0_0_1"/>
<dbReference type="InParanoid" id="Q4WES5"/>
<dbReference type="OMA" id="DNYLCPD"/>
<dbReference type="OrthoDB" id="2234316at2759"/>
<dbReference type="Proteomes" id="UP000002530">
    <property type="component" value="Chromosome 5"/>
</dbReference>
<dbReference type="CDD" id="cd23996">
    <property type="entry name" value="LCL2-like"/>
    <property type="match status" value="1"/>
</dbReference>
<dbReference type="InterPro" id="IPR034543">
    <property type="entry name" value="LCL2"/>
</dbReference>
<dbReference type="PANTHER" id="PTHR38425">
    <property type="entry name" value="LONG CHRONOLOGICAL LIFESPAN PROTEIN 2"/>
    <property type="match status" value="1"/>
</dbReference>
<dbReference type="PANTHER" id="PTHR38425:SF1">
    <property type="entry name" value="LONG CHRONOLOGICAL LIFESPAN PROTEIN 2"/>
    <property type="match status" value="1"/>
</dbReference>
<keyword id="KW-1185">Reference proteome</keyword>
<keyword id="KW-0732">Signal</keyword>
<proteinExistence type="inferred from homology"/>
<accession>Q4WES5</accession>
<feature type="signal peptide" evidence="2">
    <location>
        <begin position="1"/>
        <end position="21"/>
    </location>
</feature>
<feature type="chain" id="PRO_0000408594" description="Long chronological lifespan protein 2">
    <location>
        <begin position="22"/>
        <end position="122"/>
    </location>
</feature>
<gene>
    <name type="primary">lcl2</name>
    <name type="ORF">AFUA_5G04040</name>
</gene>